<name>FA9_PIG</name>
<sequence>YNSGKLEESFVRGNLERECIEEKCSFEEAREVFENTEKTNEFWKQYVDGDQCEPNPCLNGGLCKDDINSYECWCQVGFEGKNCELDATCNIKNGRCKQFCKTGADSKVLCSCTTGYRLAPDQKSCKPAVPFPCGRVSVSHSPTTLTRAEIIFSNMDYENSTEVEPILDSLTESNQSSDDFIRIVGGENAKPGQFPWQVLLNGKIDAFCGGSIINEKWVVTAAHCIEPGVKITVVAGEYNTEETEPTEQRRNVIRAIPHHSYNATVNKYSHDIALLELDEPLTLNSYVTPICIADKEYTNIFLKFGSGYVSGWGRVFNRGRSATILQYLKVPLVDRATCLRSTKVTIYSNMFCAGFHEGGKDSCLGDSGGPHVTEVEGTSFLTGIISWGEECAVKGKYGIYTKVSRYVNW</sequence>
<keyword id="KW-0002">3D-structure</keyword>
<keyword id="KW-0094">Blood coagulation</keyword>
<keyword id="KW-0106">Calcium</keyword>
<keyword id="KW-0903">Direct protein sequencing</keyword>
<keyword id="KW-1015">Disulfide bond</keyword>
<keyword id="KW-0245">EGF-like domain</keyword>
<keyword id="KW-0301">Gamma-carboxyglutamic acid</keyword>
<keyword id="KW-0325">Glycoprotein</keyword>
<keyword id="KW-0356">Hemostasis</keyword>
<keyword id="KW-0378">Hydrolase</keyword>
<keyword id="KW-0379">Hydroxylation</keyword>
<keyword id="KW-0460">Magnesium</keyword>
<keyword id="KW-0479">Metal-binding</keyword>
<keyword id="KW-0597">Phosphoprotein</keyword>
<keyword id="KW-0645">Protease</keyword>
<keyword id="KW-1185">Reference proteome</keyword>
<keyword id="KW-0677">Repeat</keyword>
<keyword id="KW-0964">Secreted</keyword>
<keyword id="KW-0720">Serine protease</keyword>
<keyword id="KW-0765">Sulfation</keyword>
<keyword id="KW-0865">Zymogen</keyword>
<proteinExistence type="evidence at protein level"/>
<comment type="function">
    <text evidence="2">Factor IX is a vitamin K-dependent plasma protein that participates in the intrinsic pathway of blood coagulation by converting factor X to its active form in the presence of Ca(2+) ions, phospholipids, and factor VIIIa.</text>
</comment>
<comment type="catalytic activity">
    <reaction evidence="2">
        <text>Selective cleavage of Arg-|-Ile bond in factor X to form factor Xa.</text>
        <dbReference type="EC" id="3.4.21.22"/>
    </reaction>
</comment>
<comment type="subunit">
    <text evidence="8">Heterodimer of a light chain and a heavy chain; disulfide-linked. Interacts (inactive and activated) with F11 (activated) in calcium-dependent manner. Interacts with SERPINC1.</text>
</comment>
<comment type="subcellular location">
    <subcellularLocation>
        <location evidence="2">Secreted</location>
    </subcellularLocation>
</comment>
<comment type="domain">
    <text evidence="3">Calcium binds to the gamma-carboxyglutamic acid (Gla) residues in the Gla domain. Calcium can also bind, with stronger affinity, to another site beyond the Gla domain. Under physiological ion concentrations, Ca(2+) is displaced by Mg(2+) from some of the gammaglutamate residues in the N-terminal Gla domain. This leads to a subtle conformation change that may affect the interaction with its binding protein.</text>
</comment>
<comment type="PTM">
    <text evidence="2">Activated by factor XIa, which excises the activation peptide. The propeptide can also be removed by snake venom protease (By similarity). Activated by coagulation factor VIIa-tissue factor (F7-F3) complex in calcium-dependent manner (By similarity).</text>
</comment>
<comment type="PTM">
    <text evidence="2">The iron and 2-oxoglutarate dependent 3-hydroxylation of aspartate and asparagine is (R) stereospecific within EGF domains.</text>
</comment>
<comment type="similarity">
    <text evidence="6">Belongs to the peptidase S1 family.</text>
</comment>
<organism>
    <name type="scientific">Sus scrofa</name>
    <name type="common">Pig</name>
    <dbReference type="NCBI Taxonomy" id="9823"/>
    <lineage>
        <taxon>Eukaryota</taxon>
        <taxon>Metazoa</taxon>
        <taxon>Chordata</taxon>
        <taxon>Craniata</taxon>
        <taxon>Vertebrata</taxon>
        <taxon>Euteleostomi</taxon>
        <taxon>Mammalia</taxon>
        <taxon>Eutheria</taxon>
        <taxon>Laurasiatheria</taxon>
        <taxon>Artiodactyla</taxon>
        <taxon>Suina</taxon>
        <taxon>Suidae</taxon>
        <taxon>Sus</taxon>
    </lineage>
</organism>
<dbReference type="EC" id="3.4.21.22" evidence="2"/>
<dbReference type="EMBL" id="U51135">
    <property type="protein sequence ID" value="AAA96318.1"/>
    <property type="molecule type" value="mRNA"/>
</dbReference>
<dbReference type="EMBL" id="M26235">
    <property type="protein sequence ID" value="AAA31031.1"/>
    <property type="molecule type" value="mRNA"/>
</dbReference>
<dbReference type="EMBL" id="X92427">
    <property type="protein sequence ID" value="CAA63155.1"/>
    <property type="molecule type" value="Genomic_DNA"/>
</dbReference>
<dbReference type="EMBL" id="X92593">
    <property type="protein sequence ID" value="CAA63337.1"/>
    <property type="molecule type" value="Genomic_DNA"/>
</dbReference>
<dbReference type="PIR" id="I46580">
    <property type="entry name" value="I46580"/>
</dbReference>
<dbReference type="PDB" id="1PFX">
    <property type="method" value="X-ray"/>
    <property type="resolution" value="3.00 A"/>
    <property type="chains" value="C=183-409, L=8-147"/>
</dbReference>
<dbReference type="PDB" id="1X7A">
    <property type="method" value="X-ray"/>
    <property type="resolution" value="2.90 A"/>
    <property type="chains" value="C=183-409, L=1-147"/>
</dbReference>
<dbReference type="PDBsum" id="1PFX"/>
<dbReference type="PDBsum" id="1X7A"/>
<dbReference type="SMR" id="P16293"/>
<dbReference type="FunCoup" id="P16293">
    <property type="interactions" value="56"/>
</dbReference>
<dbReference type="STRING" id="9823.ENSSSCP00000013514"/>
<dbReference type="MEROPS" id="S01.214"/>
<dbReference type="GlyCosmos" id="P16293">
    <property type="glycosylation" value="4 sites, No reported glycans"/>
</dbReference>
<dbReference type="GlyGen" id="P16293">
    <property type="glycosylation" value="4 sites"/>
</dbReference>
<dbReference type="PaxDb" id="9823-ENSSSCP00000013514"/>
<dbReference type="PeptideAtlas" id="P16293"/>
<dbReference type="eggNOG" id="ENOG502QUEV">
    <property type="taxonomic scope" value="Eukaryota"/>
</dbReference>
<dbReference type="InParanoid" id="P16293"/>
<dbReference type="EvolutionaryTrace" id="P16293"/>
<dbReference type="Proteomes" id="UP000008227">
    <property type="component" value="Unplaced"/>
</dbReference>
<dbReference type="Proteomes" id="UP000314985">
    <property type="component" value="Unplaced"/>
</dbReference>
<dbReference type="Proteomes" id="UP000694570">
    <property type="component" value="Unplaced"/>
</dbReference>
<dbReference type="Proteomes" id="UP000694571">
    <property type="component" value="Unplaced"/>
</dbReference>
<dbReference type="Proteomes" id="UP000694720">
    <property type="component" value="Unplaced"/>
</dbReference>
<dbReference type="Proteomes" id="UP000694722">
    <property type="component" value="Unplaced"/>
</dbReference>
<dbReference type="Proteomes" id="UP000694723">
    <property type="component" value="Unplaced"/>
</dbReference>
<dbReference type="Proteomes" id="UP000694724">
    <property type="component" value="Unplaced"/>
</dbReference>
<dbReference type="Proteomes" id="UP000694725">
    <property type="component" value="Unplaced"/>
</dbReference>
<dbReference type="Proteomes" id="UP000694726">
    <property type="component" value="Unplaced"/>
</dbReference>
<dbReference type="Proteomes" id="UP000694727">
    <property type="component" value="Unplaced"/>
</dbReference>
<dbReference type="Proteomes" id="UP000694728">
    <property type="component" value="Unplaced"/>
</dbReference>
<dbReference type="GO" id="GO:0005615">
    <property type="term" value="C:extracellular space"/>
    <property type="evidence" value="ECO:0000250"/>
    <property type="project" value="UniProtKB"/>
</dbReference>
<dbReference type="GO" id="GO:0005509">
    <property type="term" value="F:calcium ion binding"/>
    <property type="evidence" value="ECO:0000250"/>
    <property type="project" value="UniProtKB"/>
</dbReference>
<dbReference type="GO" id="GO:0004175">
    <property type="term" value="F:endopeptidase activity"/>
    <property type="evidence" value="ECO:0000250"/>
    <property type="project" value="UniProtKB"/>
</dbReference>
<dbReference type="GO" id="GO:0004252">
    <property type="term" value="F:serine-type endopeptidase activity"/>
    <property type="evidence" value="ECO:0000318"/>
    <property type="project" value="GO_Central"/>
</dbReference>
<dbReference type="GO" id="GO:0007596">
    <property type="term" value="P:blood coagulation"/>
    <property type="evidence" value="ECO:0000250"/>
    <property type="project" value="UniProtKB"/>
</dbReference>
<dbReference type="GO" id="GO:0006508">
    <property type="term" value="P:proteolysis"/>
    <property type="evidence" value="ECO:0000250"/>
    <property type="project" value="UniProtKB"/>
</dbReference>
<dbReference type="GO" id="GO:0031638">
    <property type="term" value="P:zymogen activation"/>
    <property type="evidence" value="ECO:0000250"/>
    <property type="project" value="UniProtKB"/>
</dbReference>
<dbReference type="CDD" id="cd00054">
    <property type="entry name" value="EGF_CA"/>
    <property type="match status" value="1"/>
</dbReference>
<dbReference type="CDD" id="cd00190">
    <property type="entry name" value="Tryp_SPc"/>
    <property type="match status" value="1"/>
</dbReference>
<dbReference type="FunFam" id="2.10.25.10:FF:000259">
    <property type="entry name" value="Coagulation factor VII"/>
    <property type="match status" value="1"/>
</dbReference>
<dbReference type="FunFam" id="2.40.10.10:FF:000013">
    <property type="entry name" value="Coagulation factor X"/>
    <property type="match status" value="1"/>
</dbReference>
<dbReference type="FunFam" id="2.10.25.10:FF:000162">
    <property type="entry name" value="Coagulation factor X (Predicted)"/>
    <property type="match status" value="1"/>
</dbReference>
<dbReference type="FunFam" id="4.10.740.10:FF:000001">
    <property type="entry name" value="vitamin K-dependent protein S"/>
    <property type="match status" value="1"/>
</dbReference>
<dbReference type="Gene3D" id="4.10.740.10">
    <property type="entry name" value="Coagulation Factor IX"/>
    <property type="match status" value="1"/>
</dbReference>
<dbReference type="Gene3D" id="2.10.25.10">
    <property type="entry name" value="Laminin"/>
    <property type="match status" value="2"/>
</dbReference>
<dbReference type="Gene3D" id="2.40.10.10">
    <property type="entry name" value="Trypsin-like serine proteases"/>
    <property type="match status" value="2"/>
</dbReference>
<dbReference type="InterPro" id="IPR017857">
    <property type="entry name" value="Coagulation_fac-like_Gla_dom"/>
</dbReference>
<dbReference type="InterPro" id="IPR001881">
    <property type="entry name" value="EGF-like_Ca-bd_dom"/>
</dbReference>
<dbReference type="InterPro" id="IPR000742">
    <property type="entry name" value="EGF-like_dom"/>
</dbReference>
<dbReference type="InterPro" id="IPR000152">
    <property type="entry name" value="EGF-type_Asp/Asn_hydroxyl_site"/>
</dbReference>
<dbReference type="InterPro" id="IPR018097">
    <property type="entry name" value="EGF_Ca-bd_CS"/>
</dbReference>
<dbReference type="InterPro" id="IPR035972">
    <property type="entry name" value="GLA-like_dom_SF"/>
</dbReference>
<dbReference type="InterPro" id="IPR000294">
    <property type="entry name" value="GLA_domain"/>
</dbReference>
<dbReference type="InterPro" id="IPR012224">
    <property type="entry name" value="Pept_S1A_FX"/>
</dbReference>
<dbReference type="InterPro" id="IPR050442">
    <property type="entry name" value="Peptidase_S1_coag_factors"/>
</dbReference>
<dbReference type="InterPro" id="IPR009003">
    <property type="entry name" value="Peptidase_S1_PA"/>
</dbReference>
<dbReference type="InterPro" id="IPR043504">
    <property type="entry name" value="Peptidase_S1_PA_chymotrypsin"/>
</dbReference>
<dbReference type="InterPro" id="IPR001314">
    <property type="entry name" value="Peptidase_S1A"/>
</dbReference>
<dbReference type="InterPro" id="IPR001254">
    <property type="entry name" value="Trypsin_dom"/>
</dbReference>
<dbReference type="InterPro" id="IPR018114">
    <property type="entry name" value="TRYPSIN_HIS"/>
</dbReference>
<dbReference type="InterPro" id="IPR033116">
    <property type="entry name" value="TRYPSIN_SER"/>
</dbReference>
<dbReference type="PANTHER" id="PTHR24278">
    <property type="entry name" value="COAGULATION FACTOR"/>
    <property type="match status" value="1"/>
</dbReference>
<dbReference type="PANTHER" id="PTHR24278:SF31">
    <property type="entry name" value="COAGULATION FACTOR IX"/>
    <property type="match status" value="1"/>
</dbReference>
<dbReference type="Pfam" id="PF00008">
    <property type="entry name" value="EGF"/>
    <property type="match status" value="1"/>
</dbReference>
<dbReference type="Pfam" id="PF14670">
    <property type="entry name" value="FXa_inhibition"/>
    <property type="match status" value="1"/>
</dbReference>
<dbReference type="Pfam" id="PF00594">
    <property type="entry name" value="Gla"/>
    <property type="match status" value="1"/>
</dbReference>
<dbReference type="Pfam" id="PF00089">
    <property type="entry name" value="Trypsin"/>
    <property type="match status" value="1"/>
</dbReference>
<dbReference type="PIRSF" id="PIRSF001143">
    <property type="entry name" value="Factor_X"/>
    <property type="match status" value="1"/>
</dbReference>
<dbReference type="PRINTS" id="PR00722">
    <property type="entry name" value="CHYMOTRYPSIN"/>
</dbReference>
<dbReference type="PRINTS" id="PR00010">
    <property type="entry name" value="EGFBLOOD"/>
</dbReference>
<dbReference type="PRINTS" id="PR00001">
    <property type="entry name" value="GLABLOOD"/>
</dbReference>
<dbReference type="SMART" id="SM00181">
    <property type="entry name" value="EGF"/>
    <property type="match status" value="2"/>
</dbReference>
<dbReference type="SMART" id="SM00179">
    <property type="entry name" value="EGF_CA"/>
    <property type="match status" value="1"/>
</dbReference>
<dbReference type="SMART" id="SM00069">
    <property type="entry name" value="GLA"/>
    <property type="match status" value="1"/>
</dbReference>
<dbReference type="SMART" id="SM00020">
    <property type="entry name" value="Tryp_SPc"/>
    <property type="match status" value="1"/>
</dbReference>
<dbReference type="SUPFAM" id="SSF57196">
    <property type="entry name" value="EGF/Laminin"/>
    <property type="match status" value="2"/>
</dbReference>
<dbReference type="SUPFAM" id="SSF57630">
    <property type="entry name" value="GLA-domain"/>
    <property type="match status" value="1"/>
</dbReference>
<dbReference type="SUPFAM" id="SSF50494">
    <property type="entry name" value="Trypsin-like serine proteases"/>
    <property type="match status" value="1"/>
</dbReference>
<dbReference type="PROSITE" id="PS00010">
    <property type="entry name" value="ASX_HYDROXYL"/>
    <property type="match status" value="1"/>
</dbReference>
<dbReference type="PROSITE" id="PS00022">
    <property type="entry name" value="EGF_1"/>
    <property type="match status" value="1"/>
</dbReference>
<dbReference type="PROSITE" id="PS01186">
    <property type="entry name" value="EGF_2"/>
    <property type="match status" value="2"/>
</dbReference>
<dbReference type="PROSITE" id="PS50026">
    <property type="entry name" value="EGF_3"/>
    <property type="match status" value="1"/>
</dbReference>
<dbReference type="PROSITE" id="PS01187">
    <property type="entry name" value="EGF_CA"/>
    <property type="match status" value="1"/>
</dbReference>
<dbReference type="PROSITE" id="PS00011">
    <property type="entry name" value="GLA_1"/>
    <property type="match status" value="1"/>
</dbReference>
<dbReference type="PROSITE" id="PS50998">
    <property type="entry name" value="GLA_2"/>
    <property type="match status" value="1"/>
</dbReference>
<dbReference type="PROSITE" id="PS50240">
    <property type="entry name" value="TRYPSIN_DOM"/>
    <property type="match status" value="1"/>
</dbReference>
<dbReference type="PROSITE" id="PS00134">
    <property type="entry name" value="TRYPSIN_HIS"/>
    <property type="match status" value="1"/>
</dbReference>
<dbReference type="PROSITE" id="PS00135">
    <property type="entry name" value="TRYPSIN_SER"/>
    <property type="match status" value="1"/>
</dbReference>
<reference key="1">
    <citation type="submission" date="1996-03" db="EMBL/GenBank/DDBJ databases">
        <authorList>
            <person name="Lollar P."/>
        </authorList>
    </citation>
    <scope>NUCLEOTIDE SEQUENCE [MRNA] OF 9-146</scope>
    <source>
        <tissue>Liver</tissue>
    </source>
</reference>
<reference key="2">
    <citation type="journal article" date="1990" name="Genomics">
        <title>Direct sequencing of the activation peptide and the catalytic domain of the factor IX gene in six species.</title>
        <authorList>
            <person name="Sarkar G."/>
            <person name="Koeberl D.D."/>
            <person name="Sommer S.S."/>
        </authorList>
    </citation>
    <scope>NUCLEOTIDE SEQUENCE [MRNA] OF 139-409</scope>
</reference>
<reference key="3">
    <citation type="journal article" date="1996" name="Anim. Genet.">
        <title>Detection of an MboI RFLP at the porcine clotting factor IX locus and verification of sex linkage.</title>
        <authorList>
            <person name="Signer E.N."/>
            <person name="Armour J.A.L."/>
            <person name="Jeffreys A.J."/>
        </authorList>
    </citation>
    <scope>NUCLEOTIDE SEQUENCE [GENOMIC DNA] OF 237-245</scope>
    <source>
        <strain>Meishan</strain>
        <strain>Wild boar</strain>
    </source>
</reference>
<reference key="4">
    <citation type="journal article" date="1987" name="Biochemistry">
        <title>Degradation of coagulation proteins by an enzyme from Malayan pit viper (Akistrodon rhodostoma) venom.</title>
        <authorList>
            <person name="Lollar P."/>
            <person name="Parker C.G."/>
            <person name="Kajenski P.J."/>
            <person name="Litwiller R.D."/>
            <person name="Fass D.N."/>
        </authorList>
    </citation>
    <scope>PROTEIN SEQUENCE OF 1-12</scope>
</reference>
<reference key="5">
    <citation type="journal article" date="1995" name="Proc. Natl. Acad. Sci. U.S.A.">
        <title>X-ray structure of clotting factor IXa: active site and module structure related to Xase activity and hemophilia B.</title>
        <authorList>
            <person name="Brandstetter H."/>
            <person name="Bauer M."/>
            <person name="Huber R."/>
            <person name="Lollar P."/>
            <person name="Bode W."/>
        </authorList>
    </citation>
    <scope>X-RAY CRYSTALLOGRAPHY (3.0 ANGSTROMS) IN COMPLEX WITH INHIBITOR</scope>
    <scope>DISULFIDE BOND</scope>
    <scope>SUBUNIT</scope>
</reference>
<protein>
    <recommendedName>
        <fullName>Coagulation factor IX</fullName>
        <ecNumber evidence="2">3.4.21.22</ecNumber>
    </recommendedName>
    <alternativeName>
        <fullName>Christmas factor</fullName>
    </alternativeName>
    <component>
        <recommendedName>
            <fullName>Coagulation factor IXa light chain</fullName>
        </recommendedName>
    </component>
    <component>
        <recommendedName>
            <fullName>Coagulation factor IXa heavy chain</fullName>
        </recommendedName>
    </component>
</protein>
<accession>P16293</accession>
<accession>Q28994</accession>
<feature type="chain" id="PRO_0000027770" description="Coagulation factor IX">
    <location>
        <begin position="1"/>
        <end position="409"/>
    </location>
</feature>
<feature type="chain" id="PRO_0000027771" description="Coagulation factor IXa light chain">
    <location>
        <begin position="1"/>
        <end position="147"/>
    </location>
</feature>
<feature type="propeptide" id="PRO_0000027772" description="Activation peptide" evidence="1">
    <location>
        <begin position="148"/>
        <end position="182"/>
    </location>
</feature>
<feature type="chain" id="PRO_0000027773" description="Coagulation factor IXa heavy chain">
    <location>
        <begin position="183"/>
        <end position="409"/>
    </location>
</feature>
<feature type="domain" description="Gla" evidence="7">
    <location>
        <begin position="1"/>
        <end position="47"/>
    </location>
</feature>
<feature type="domain" description="EGF-like 1; calcium-binding" evidence="5">
    <location>
        <begin position="48"/>
        <end position="84"/>
    </location>
</feature>
<feature type="domain" description="EGF-like 2" evidence="5">
    <location>
        <begin position="85"/>
        <end position="126"/>
    </location>
</feature>
<feature type="domain" description="Peptidase S1" evidence="6">
    <location>
        <begin position="183"/>
        <end position="409"/>
    </location>
</feature>
<feature type="active site" description="Charge relay system" evidence="2">
    <location>
        <position position="223"/>
    </location>
</feature>
<feature type="active site" description="Charge relay system" evidence="2">
    <location>
        <position position="271"/>
    </location>
</feature>
<feature type="active site" description="Charge relay system" evidence="2">
    <location>
        <position position="367"/>
    </location>
</feature>
<feature type="binding site" evidence="2">
    <location>
        <position position="1"/>
    </location>
    <ligand>
        <name>Ca(2+)</name>
        <dbReference type="ChEBI" id="CHEBI:29108"/>
        <label>1</label>
    </ligand>
</feature>
<feature type="binding site" evidence="2">
    <location>
        <position position="2"/>
    </location>
    <ligand>
        <name>Ca(2+)</name>
        <dbReference type="ChEBI" id="CHEBI:29108"/>
        <label>2</label>
    </ligand>
</feature>
<feature type="binding site" description="via 4-carboxyglutamate" evidence="2">
    <location>
        <position position="7"/>
    </location>
    <ligand>
        <name>Ca(2+)</name>
        <dbReference type="ChEBI" id="CHEBI:29108"/>
        <label>1</label>
    </ligand>
</feature>
<feature type="binding site" description="via 4-carboxyglutamate" evidence="2">
    <location>
        <position position="7"/>
    </location>
    <ligand>
        <name>Ca(2+)</name>
        <dbReference type="ChEBI" id="CHEBI:29108"/>
        <label>2</label>
    </ligand>
</feature>
<feature type="binding site" description="via 4-carboxyglutamate" evidence="2">
    <location>
        <position position="8"/>
    </location>
    <ligand>
        <name>Ca(2+)</name>
        <dbReference type="ChEBI" id="CHEBI:29108"/>
        <label>2</label>
    </ligand>
</feature>
<feature type="binding site" description="via 4-carboxyglutamate" evidence="2">
    <location>
        <position position="8"/>
    </location>
    <ligand>
        <name>Ca(2+)</name>
        <dbReference type="ChEBI" id="CHEBI:29108"/>
        <label>3</label>
    </ligand>
</feature>
<feature type="binding site" description="via 4-carboxyglutamate" evidence="2">
    <location>
        <position position="16"/>
    </location>
    <ligand>
        <name>Ca(2+)</name>
        <dbReference type="ChEBI" id="CHEBI:29108"/>
        <label>4</label>
    </ligand>
</feature>
<feature type="binding site" description="via 4-carboxyglutamate" evidence="2">
    <location>
        <position position="16"/>
    </location>
    <ligand>
        <name>Mg(2+)</name>
        <dbReference type="ChEBI" id="CHEBI:18420"/>
        <label>1</label>
    </ligand>
</feature>
<feature type="binding site" description="via 4-carboxyglutamate" evidence="2">
    <location>
        <position position="18"/>
    </location>
    <ligand>
        <name>Ca(2+)</name>
        <dbReference type="ChEBI" id="CHEBI:29108"/>
        <label>1</label>
    </ligand>
</feature>
<feature type="binding site" description="via 4-carboxyglutamate" evidence="2">
    <location>
        <position position="18"/>
    </location>
    <ligand>
        <name>Ca(2+)</name>
        <dbReference type="ChEBI" id="CHEBI:29108"/>
        <label>2</label>
    </ligand>
</feature>
<feature type="binding site" description="via 4-carboxyglutamate" evidence="2">
    <location>
        <position position="18"/>
    </location>
    <ligand>
        <name>Ca(2+)</name>
        <dbReference type="ChEBI" id="CHEBI:29108"/>
        <label>3</label>
    </ligand>
</feature>
<feature type="binding site" description="via 4-carboxyglutamate" evidence="2">
    <location>
        <position position="21"/>
    </location>
    <ligand>
        <name>Ca(2+)</name>
        <dbReference type="ChEBI" id="CHEBI:29108"/>
        <label>4</label>
    </ligand>
</feature>
<feature type="binding site" description="via 4-carboxyglutamate" evidence="2">
    <location>
        <position position="21"/>
    </location>
    <ligand>
        <name>Mg(2+)</name>
        <dbReference type="ChEBI" id="CHEBI:18420"/>
        <label>1</label>
    </ligand>
</feature>
<feature type="binding site" description="via 4-carboxyglutamate" evidence="2">
    <location>
        <position position="22"/>
    </location>
    <ligand>
        <name>Ca(2+)</name>
        <dbReference type="ChEBI" id="CHEBI:29108"/>
        <label>1</label>
    </ligand>
</feature>
<feature type="binding site" description="via 4-carboxyglutamate" evidence="2">
    <location>
        <position position="27"/>
    </location>
    <ligand>
        <name>Ca(2+)</name>
        <dbReference type="ChEBI" id="CHEBI:29108"/>
        <label>5</label>
    </ligand>
</feature>
<feature type="binding site" description="via 4-carboxyglutamate" evidence="2">
    <location>
        <position position="27"/>
    </location>
    <ligand>
        <name>Mg(2+)</name>
        <dbReference type="ChEBI" id="CHEBI:18420"/>
        <label>2</label>
    </ligand>
</feature>
<feature type="binding site" description="via 4-carboxyglutamate" evidence="2">
    <location>
        <position position="28"/>
    </location>
    <ligand>
        <name>Ca(2+)</name>
        <dbReference type="ChEBI" id="CHEBI:29108"/>
        <label>2</label>
    </ligand>
</feature>
<feature type="binding site" description="via 4-carboxyglutamate" evidence="2">
    <location>
        <position position="28"/>
    </location>
    <ligand>
        <name>Ca(2+)</name>
        <dbReference type="ChEBI" id="CHEBI:29108"/>
        <label>3</label>
    </ligand>
</feature>
<feature type="binding site" description="via 4-carboxyglutamate" evidence="2">
    <location>
        <position position="31"/>
    </location>
    <ligand>
        <name>Ca(2+)</name>
        <dbReference type="ChEBI" id="CHEBI:29108"/>
        <label>3</label>
    </ligand>
</feature>
<feature type="binding site" description="via 4-carboxyglutamate" evidence="2">
    <location>
        <position position="31"/>
    </location>
    <ligand>
        <name>Ca(2+)</name>
        <dbReference type="ChEBI" id="CHEBI:29108"/>
        <label>5</label>
    </ligand>
</feature>
<feature type="binding site" description="via 4-carboxyglutamate" evidence="2">
    <location>
        <position position="31"/>
    </location>
    <ligand>
        <name>Mg(2+)</name>
        <dbReference type="ChEBI" id="CHEBI:18420"/>
        <label>2</label>
    </ligand>
</feature>
<feature type="binding site" description="via 4-carboxyglutamate" evidence="2">
    <location>
        <position position="37"/>
    </location>
    <ligand>
        <name>Ca(2+)</name>
        <dbReference type="ChEBI" id="CHEBI:29108"/>
        <label>6</label>
    </ligand>
</feature>
<feature type="binding site" description="via 4-carboxyglutamate" evidence="2">
    <location>
        <position position="37"/>
    </location>
    <ligand>
        <name>Mg(2+)</name>
        <dbReference type="ChEBI" id="CHEBI:18420"/>
        <label>3</label>
    </ligand>
</feature>
<feature type="binding site" description="via 4-carboxyglutamate" evidence="2">
    <location>
        <position position="41"/>
    </location>
    <ligand>
        <name>Ca(2+)</name>
        <dbReference type="ChEBI" id="CHEBI:29108"/>
        <label>6</label>
    </ligand>
</feature>
<feature type="binding site" description="via 4-carboxyglutamate" evidence="2">
    <location>
        <position position="41"/>
    </location>
    <ligand>
        <name>Mg(2+)</name>
        <dbReference type="ChEBI" id="CHEBI:18420"/>
        <label>3</label>
    </ligand>
</feature>
<feature type="binding site" evidence="2">
    <location>
        <position position="48"/>
    </location>
    <ligand>
        <name>Ca(2+)</name>
        <dbReference type="ChEBI" id="CHEBI:29108"/>
        <label>7</label>
    </ligand>
</feature>
<feature type="binding site" evidence="2">
    <location>
        <position position="49"/>
    </location>
    <ligand>
        <name>Ca(2+)</name>
        <dbReference type="ChEBI" id="CHEBI:29108"/>
        <label>7</label>
    </ligand>
</feature>
<feature type="binding site" evidence="2">
    <location>
        <position position="51"/>
    </location>
    <ligand>
        <name>Ca(2+)</name>
        <dbReference type="ChEBI" id="CHEBI:29108"/>
        <label>7</label>
    </ligand>
</feature>
<feature type="binding site" evidence="2">
    <location>
        <position position="65"/>
    </location>
    <ligand>
        <name>Ca(2+)</name>
        <dbReference type="ChEBI" id="CHEBI:29108"/>
        <label>7</label>
    </ligand>
</feature>
<feature type="binding site" evidence="2">
    <location>
        <position position="66"/>
    </location>
    <ligand>
        <name>Ca(2+)</name>
        <dbReference type="ChEBI" id="CHEBI:29108"/>
        <label>7</label>
    </ligand>
</feature>
<feature type="binding site" evidence="2">
    <location>
        <position position="237"/>
    </location>
    <ligand>
        <name>Ca(2+)</name>
        <dbReference type="ChEBI" id="CHEBI:29108"/>
        <label>8</label>
    </ligand>
</feature>
<feature type="binding site" evidence="2">
    <location>
        <position position="239"/>
    </location>
    <ligand>
        <name>Ca(2+)</name>
        <dbReference type="ChEBI" id="CHEBI:29108"/>
        <label>8</label>
    </ligand>
</feature>
<feature type="binding site" evidence="2">
    <location>
        <position position="242"/>
    </location>
    <ligand>
        <name>Ca(2+)</name>
        <dbReference type="ChEBI" id="CHEBI:29108"/>
        <label>8</label>
    </ligand>
</feature>
<feature type="binding site" evidence="2">
    <location>
        <position position="244"/>
    </location>
    <ligand>
        <name>Ca(2+)</name>
        <dbReference type="ChEBI" id="CHEBI:29108"/>
        <label>8</label>
    </ligand>
</feature>
<feature type="binding site" evidence="2">
    <location>
        <position position="247"/>
    </location>
    <ligand>
        <name>Ca(2+)</name>
        <dbReference type="ChEBI" id="CHEBI:29108"/>
        <label>8</label>
    </ligand>
</feature>
<feature type="site" description="Cleavage; by factor XIa" evidence="2">
    <location>
        <begin position="147"/>
        <end position="148"/>
    </location>
</feature>
<feature type="site" description="Cleavage; by factor XIa" evidence="2">
    <location>
        <begin position="182"/>
        <end position="183"/>
    </location>
</feature>
<feature type="modified residue" description="4-carboxyglutamate" evidence="3 7">
    <location>
        <position position="7"/>
    </location>
</feature>
<feature type="modified residue" description="4-carboxyglutamate" evidence="3 7">
    <location>
        <position position="8"/>
    </location>
</feature>
<feature type="modified residue" description="4-carboxyglutamate" evidence="3 7">
    <location>
        <position position="16"/>
    </location>
</feature>
<feature type="modified residue" description="4-carboxyglutamate" evidence="3 7">
    <location>
        <position position="18"/>
    </location>
</feature>
<feature type="modified residue" description="4-carboxyglutamate" evidence="3 7">
    <location>
        <position position="21"/>
    </location>
</feature>
<feature type="modified residue" description="4-carboxyglutamate" evidence="3 7">
    <location>
        <position position="22"/>
    </location>
</feature>
<feature type="modified residue" description="4-carboxyglutamate" evidence="3 7">
    <location>
        <position position="27"/>
    </location>
</feature>
<feature type="modified residue" description="4-carboxyglutamate" evidence="3 7">
    <location>
        <position position="28"/>
    </location>
</feature>
<feature type="modified residue" description="4-carboxyglutamate" evidence="3 7">
    <location>
        <position position="31"/>
    </location>
</feature>
<feature type="modified residue" description="4-carboxyglutamate" evidence="3 7">
    <location>
        <position position="34"/>
    </location>
</feature>
<feature type="modified residue" description="4-carboxyglutamate" evidence="3 7">
    <location>
        <position position="37"/>
    </location>
</feature>
<feature type="modified residue" description="4-carboxyglutamate" evidence="3 7">
    <location>
        <position position="41"/>
    </location>
</feature>
<feature type="modified residue" description="(3R)-3-hydroxyaspartate" evidence="2">
    <location>
        <position position="65"/>
    </location>
</feature>
<feature type="modified residue" description="Phosphoserine" evidence="2">
    <location>
        <position position="69"/>
    </location>
</feature>
<feature type="modified residue" description="Sulfotyrosine" evidence="2">
    <location>
        <position position="157"/>
    </location>
</feature>
<feature type="modified residue" description="Phosphoserine" evidence="2">
    <location>
        <position position="160"/>
    </location>
</feature>
<feature type="modified residue" description="Phosphothreonine; alternate" evidence="2">
    <location>
        <position position="161"/>
    </location>
</feature>
<feature type="glycosylation site" description="O-linked (GalNAc...) threonine; alternate" evidence="2">
    <location>
        <position position="161"/>
    </location>
</feature>
<feature type="glycosylation site" description="O-linked (GalNAc...) threonine" evidence="2">
    <location>
        <position position="171"/>
    </location>
</feature>
<feature type="glycosylation site" description="N-linked (GlcNAc...) asparagine" evidence="4">
    <location>
        <position position="174"/>
    </location>
</feature>
<feature type="glycosylation site" description="N-linked (GlcNAc...) asparagine" evidence="4">
    <location>
        <position position="262"/>
    </location>
</feature>
<feature type="disulfide bond" evidence="8">
    <location>
        <begin position="19"/>
        <end position="24"/>
    </location>
</feature>
<feature type="disulfide bond" evidence="8">
    <location>
        <begin position="52"/>
        <end position="63"/>
    </location>
</feature>
<feature type="disulfide bond" evidence="8">
    <location>
        <begin position="57"/>
        <end position="72"/>
    </location>
</feature>
<feature type="disulfide bond" evidence="8">
    <location>
        <begin position="74"/>
        <end position="83"/>
    </location>
</feature>
<feature type="disulfide bond" evidence="8">
    <location>
        <begin position="89"/>
        <end position="100"/>
    </location>
</feature>
<feature type="disulfide bond" evidence="8">
    <location>
        <begin position="96"/>
        <end position="110"/>
    </location>
</feature>
<feature type="disulfide bond" evidence="8">
    <location>
        <begin position="112"/>
        <end position="125"/>
    </location>
</feature>
<feature type="disulfide bond" description="Interchain (between light and heavy chains)" evidence="8">
    <location>
        <begin position="133"/>
        <end position="291"/>
    </location>
</feature>
<feature type="disulfide bond" evidence="8">
    <location>
        <begin position="208"/>
        <end position="224"/>
    </location>
</feature>
<feature type="disulfide bond" evidence="8">
    <location>
        <begin position="338"/>
        <end position="352"/>
    </location>
</feature>
<feature type="disulfide bond" evidence="8">
    <location>
        <begin position="363"/>
        <end position="391"/>
    </location>
</feature>
<feature type="non-terminal residue">
    <location>
        <position position="1"/>
    </location>
</feature>
<feature type="strand" evidence="9">
    <location>
        <begin position="4"/>
        <end position="6"/>
    </location>
</feature>
<feature type="helix" evidence="9">
    <location>
        <begin position="15"/>
        <end position="18"/>
    </location>
</feature>
<feature type="turn" evidence="9">
    <location>
        <begin position="19"/>
        <end position="23"/>
    </location>
</feature>
<feature type="helix" evidence="9">
    <location>
        <begin position="26"/>
        <end position="33"/>
    </location>
</feature>
<feature type="helix" evidence="9">
    <location>
        <begin position="37"/>
        <end position="44"/>
    </location>
</feature>
<feature type="turn" evidence="9">
    <location>
        <begin position="51"/>
        <end position="54"/>
    </location>
</feature>
<feature type="strand" evidence="10">
    <location>
        <begin position="62"/>
        <end position="65"/>
    </location>
</feature>
<feature type="strand" evidence="10">
    <location>
        <begin position="70"/>
        <end position="73"/>
    </location>
</feature>
<feature type="strand" evidence="10">
    <location>
        <begin position="76"/>
        <end position="80"/>
    </location>
</feature>
<feature type="turn" evidence="10">
    <location>
        <begin position="81"/>
        <end position="83"/>
    </location>
</feature>
<feature type="helix" evidence="10">
    <location>
        <begin position="92"/>
        <end position="94"/>
    </location>
</feature>
<feature type="strand" evidence="10">
    <location>
        <begin position="97"/>
        <end position="99"/>
    </location>
</feature>
<feature type="strand" evidence="10">
    <location>
        <begin position="104"/>
        <end position="106"/>
    </location>
</feature>
<feature type="strand" evidence="10">
    <location>
        <begin position="116"/>
        <end position="118"/>
    </location>
</feature>
<feature type="strand" evidence="10">
    <location>
        <begin position="122"/>
        <end position="127"/>
    </location>
</feature>
<feature type="strand" evidence="10">
    <location>
        <begin position="129"/>
        <end position="131"/>
    </location>
</feature>
<feature type="turn" evidence="10">
    <location>
        <begin position="138"/>
        <end position="143"/>
    </location>
</feature>
<feature type="strand" evidence="10">
    <location>
        <begin position="197"/>
        <end position="201"/>
    </location>
</feature>
<feature type="strand" evidence="10">
    <location>
        <begin position="208"/>
        <end position="214"/>
    </location>
</feature>
<feature type="strand" evidence="10">
    <location>
        <begin position="217"/>
        <end position="220"/>
    </location>
</feature>
<feature type="helix" evidence="9">
    <location>
        <begin position="222"/>
        <end position="224"/>
    </location>
</feature>
<feature type="strand" evidence="10">
    <location>
        <begin position="232"/>
        <end position="234"/>
    </location>
</feature>
<feature type="strand" evidence="10">
    <location>
        <begin position="252"/>
        <end position="257"/>
    </location>
</feature>
<feature type="strand" evidence="10">
    <location>
        <begin position="263"/>
        <end position="265"/>
    </location>
</feature>
<feature type="strand" evidence="10">
    <location>
        <begin position="273"/>
        <end position="279"/>
    </location>
</feature>
<feature type="strand" evidence="10">
    <location>
        <begin position="285"/>
        <end position="287"/>
    </location>
</feature>
<feature type="helix" evidence="10">
    <location>
        <begin position="295"/>
        <end position="302"/>
    </location>
</feature>
<feature type="strand" evidence="10">
    <location>
        <begin position="305"/>
        <end position="312"/>
    </location>
</feature>
<feature type="strand" evidence="10">
    <location>
        <begin position="314"/>
        <end position="319"/>
    </location>
</feature>
<feature type="strand" evidence="10">
    <location>
        <begin position="326"/>
        <end position="333"/>
    </location>
</feature>
<feature type="helix" evidence="10">
    <location>
        <begin position="335"/>
        <end position="339"/>
    </location>
</feature>
<feature type="strand" evidence="10">
    <location>
        <begin position="348"/>
        <end position="354"/>
    </location>
</feature>
<feature type="strand" evidence="10">
    <location>
        <begin position="356"/>
        <end position="359"/>
    </location>
</feature>
<feature type="turn" evidence="10">
    <location>
        <begin position="364"/>
        <end position="368"/>
    </location>
</feature>
<feature type="strand" evidence="10">
    <location>
        <begin position="370"/>
        <end position="377"/>
    </location>
</feature>
<feature type="strand" evidence="10">
    <location>
        <begin position="379"/>
        <end position="387"/>
    </location>
</feature>
<feature type="strand" evidence="10">
    <location>
        <begin position="389"/>
        <end position="392"/>
    </location>
</feature>
<feature type="strand" evidence="10">
    <location>
        <begin position="398"/>
        <end position="401"/>
    </location>
</feature>
<feature type="helix" evidence="10">
    <location>
        <begin position="403"/>
        <end position="409"/>
    </location>
</feature>
<evidence type="ECO:0000250" key="1"/>
<evidence type="ECO:0000250" key="2">
    <source>
        <dbReference type="UniProtKB" id="P00740"/>
    </source>
</evidence>
<evidence type="ECO:0000250" key="3">
    <source>
        <dbReference type="UniProtKB" id="P00741"/>
    </source>
</evidence>
<evidence type="ECO:0000255" key="4"/>
<evidence type="ECO:0000255" key="5">
    <source>
        <dbReference type="PROSITE-ProRule" id="PRU00076"/>
    </source>
</evidence>
<evidence type="ECO:0000255" key="6">
    <source>
        <dbReference type="PROSITE-ProRule" id="PRU00274"/>
    </source>
</evidence>
<evidence type="ECO:0000255" key="7">
    <source>
        <dbReference type="PROSITE-ProRule" id="PRU00463"/>
    </source>
</evidence>
<evidence type="ECO:0000269" key="8">
    <source>
    </source>
</evidence>
<evidence type="ECO:0007829" key="9">
    <source>
        <dbReference type="PDB" id="1PFX"/>
    </source>
</evidence>
<evidence type="ECO:0007829" key="10">
    <source>
        <dbReference type="PDB" id="1X7A"/>
    </source>
</evidence>
<gene>
    <name type="primary">F9</name>
</gene>